<protein>
    <recommendedName>
        <fullName>Inorganic pyrophosphatase</fullName>
        <ecNumber>3.6.1.1</ecNumber>
    </recommendedName>
    <alternativeName>
        <fullName>Pyrophosphate phospho-hydrolase</fullName>
        <shortName>PPase</shortName>
    </alternativeName>
</protein>
<sequence>MSFTARQIGAPNTLDYRVFIEQNGKPVSPFHDIPLYANEEKTVLNMIVEVPRWTNAKLEISKEEKLNPILQDTKKGKLRFVRNCFPHHGYIHNYGAFPQTWEDPNQVHPETKAKGDNDPLDVCEIGEQVGYVGQVKQVKVLGVMALLDEGETDWKIIVIDVNDPLASKLNDIEDVETHLPGLLRATNEWFRIYKIPDGKPENQFAFSGECKNKKYAEEIINECSEAWEKLIKGETADSKGISLDNTTLSSTQTFSEAAASGVPPASVQPAAPIDKSVDKWFFISGAH</sequence>
<name>IPYR_DEBHA</name>
<reference key="1">
    <citation type="journal article" date="2004" name="Nature">
        <title>Genome evolution in yeasts.</title>
        <authorList>
            <person name="Dujon B."/>
            <person name="Sherman D."/>
            <person name="Fischer G."/>
            <person name="Durrens P."/>
            <person name="Casaregola S."/>
            <person name="Lafontaine I."/>
            <person name="de Montigny J."/>
            <person name="Marck C."/>
            <person name="Neuveglise C."/>
            <person name="Talla E."/>
            <person name="Goffard N."/>
            <person name="Frangeul L."/>
            <person name="Aigle M."/>
            <person name="Anthouard V."/>
            <person name="Babour A."/>
            <person name="Barbe V."/>
            <person name="Barnay S."/>
            <person name="Blanchin S."/>
            <person name="Beckerich J.-M."/>
            <person name="Beyne E."/>
            <person name="Bleykasten C."/>
            <person name="Boisrame A."/>
            <person name="Boyer J."/>
            <person name="Cattolico L."/>
            <person name="Confanioleri F."/>
            <person name="de Daruvar A."/>
            <person name="Despons L."/>
            <person name="Fabre E."/>
            <person name="Fairhead C."/>
            <person name="Ferry-Dumazet H."/>
            <person name="Groppi A."/>
            <person name="Hantraye F."/>
            <person name="Hennequin C."/>
            <person name="Jauniaux N."/>
            <person name="Joyet P."/>
            <person name="Kachouri R."/>
            <person name="Kerrest A."/>
            <person name="Koszul R."/>
            <person name="Lemaire M."/>
            <person name="Lesur I."/>
            <person name="Ma L."/>
            <person name="Muller H."/>
            <person name="Nicaud J.-M."/>
            <person name="Nikolski M."/>
            <person name="Oztas S."/>
            <person name="Ozier-Kalogeropoulos O."/>
            <person name="Pellenz S."/>
            <person name="Potier S."/>
            <person name="Richard G.-F."/>
            <person name="Straub M.-L."/>
            <person name="Suleau A."/>
            <person name="Swennen D."/>
            <person name="Tekaia F."/>
            <person name="Wesolowski-Louvel M."/>
            <person name="Westhof E."/>
            <person name="Wirth B."/>
            <person name="Zeniou-Meyer M."/>
            <person name="Zivanovic Y."/>
            <person name="Bolotin-Fukuhara M."/>
            <person name="Thierry A."/>
            <person name="Bouchier C."/>
            <person name="Caudron B."/>
            <person name="Scarpelli C."/>
            <person name="Gaillardin C."/>
            <person name="Weissenbach J."/>
            <person name="Wincker P."/>
            <person name="Souciet J.-L."/>
        </authorList>
    </citation>
    <scope>NUCLEOTIDE SEQUENCE [LARGE SCALE GENOMIC DNA]</scope>
    <source>
        <strain>ATCC 36239 / CBS 767 / BCRC 21394 / JCM 1990 / NBRC 0083 / IGC 2968</strain>
    </source>
</reference>
<evidence type="ECO:0000250" key="1"/>
<evidence type="ECO:0000305" key="2"/>
<proteinExistence type="inferred from homology"/>
<organism>
    <name type="scientific">Debaryomyces hansenii (strain ATCC 36239 / CBS 767 / BCRC 21394 / JCM 1990 / NBRC 0083 / IGC 2968)</name>
    <name type="common">Yeast</name>
    <name type="synonym">Torulaspora hansenii</name>
    <dbReference type="NCBI Taxonomy" id="284592"/>
    <lineage>
        <taxon>Eukaryota</taxon>
        <taxon>Fungi</taxon>
        <taxon>Dikarya</taxon>
        <taxon>Ascomycota</taxon>
        <taxon>Saccharomycotina</taxon>
        <taxon>Pichiomycetes</taxon>
        <taxon>Debaryomycetaceae</taxon>
        <taxon>Debaryomyces</taxon>
    </lineage>
</organism>
<dbReference type="EC" id="3.6.1.1"/>
<dbReference type="EMBL" id="CR382134">
    <property type="protein sequence ID" value="CAG85520.1"/>
    <property type="molecule type" value="Genomic_DNA"/>
</dbReference>
<dbReference type="RefSeq" id="XP_457514.1">
    <property type="nucleotide sequence ID" value="XM_457514.1"/>
</dbReference>
<dbReference type="SMR" id="Q6BWA5"/>
<dbReference type="FunCoup" id="Q6BWA5">
    <property type="interactions" value="1075"/>
</dbReference>
<dbReference type="STRING" id="284592.Q6BWA5"/>
<dbReference type="GeneID" id="2913468"/>
<dbReference type="KEGG" id="dha:DEHA2B13090g"/>
<dbReference type="VEuPathDB" id="FungiDB:DEHA2B13090g"/>
<dbReference type="eggNOG" id="KOG1626">
    <property type="taxonomic scope" value="Eukaryota"/>
</dbReference>
<dbReference type="HOGENOM" id="CLU_040684_0_1_1"/>
<dbReference type="InParanoid" id="Q6BWA5"/>
<dbReference type="OMA" id="LYANEQK"/>
<dbReference type="OrthoDB" id="1608002at2759"/>
<dbReference type="Proteomes" id="UP000000599">
    <property type="component" value="Chromosome B"/>
</dbReference>
<dbReference type="GO" id="GO:0005737">
    <property type="term" value="C:cytoplasm"/>
    <property type="evidence" value="ECO:0007669"/>
    <property type="project" value="UniProtKB-SubCell"/>
</dbReference>
<dbReference type="GO" id="GO:0004427">
    <property type="term" value="F:inorganic diphosphate phosphatase activity"/>
    <property type="evidence" value="ECO:0007669"/>
    <property type="project" value="UniProtKB-EC"/>
</dbReference>
<dbReference type="GO" id="GO:0000287">
    <property type="term" value="F:magnesium ion binding"/>
    <property type="evidence" value="ECO:0007669"/>
    <property type="project" value="InterPro"/>
</dbReference>
<dbReference type="GO" id="GO:0006796">
    <property type="term" value="P:phosphate-containing compound metabolic process"/>
    <property type="evidence" value="ECO:0007669"/>
    <property type="project" value="InterPro"/>
</dbReference>
<dbReference type="CDD" id="cd00412">
    <property type="entry name" value="pyrophosphatase"/>
    <property type="match status" value="1"/>
</dbReference>
<dbReference type="FunFam" id="3.90.80.10:FF:000004">
    <property type="entry name" value="Inorganic pyrophosphatase"/>
    <property type="match status" value="1"/>
</dbReference>
<dbReference type="Gene3D" id="3.90.80.10">
    <property type="entry name" value="Inorganic pyrophosphatase"/>
    <property type="match status" value="1"/>
</dbReference>
<dbReference type="InterPro" id="IPR008162">
    <property type="entry name" value="Pyrophosphatase"/>
</dbReference>
<dbReference type="InterPro" id="IPR036649">
    <property type="entry name" value="Pyrophosphatase_sf"/>
</dbReference>
<dbReference type="PANTHER" id="PTHR10286">
    <property type="entry name" value="INORGANIC PYROPHOSPHATASE"/>
    <property type="match status" value="1"/>
</dbReference>
<dbReference type="Pfam" id="PF00719">
    <property type="entry name" value="Pyrophosphatase"/>
    <property type="match status" value="1"/>
</dbReference>
<dbReference type="SUPFAM" id="SSF50324">
    <property type="entry name" value="Inorganic pyrophosphatase"/>
    <property type="match status" value="1"/>
</dbReference>
<dbReference type="PROSITE" id="PS00387">
    <property type="entry name" value="PPASE"/>
    <property type="match status" value="1"/>
</dbReference>
<accession>Q6BWA5</accession>
<feature type="chain" id="PRO_0000137582" description="Inorganic pyrophosphatase">
    <location>
        <begin position="1"/>
        <end position="287"/>
    </location>
</feature>
<feature type="binding site" evidence="1">
    <location>
        <position position="79"/>
    </location>
    <ligand>
        <name>diphosphate</name>
        <dbReference type="ChEBI" id="CHEBI:33019"/>
    </ligand>
</feature>
<feature type="binding site" evidence="1">
    <location>
        <position position="116"/>
    </location>
    <ligand>
        <name>Mg(2+)</name>
        <dbReference type="ChEBI" id="CHEBI:18420"/>
        <label>1</label>
    </ligand>
</feature>
<feature type="binding site" evidence="1">
    <location>
        <position position="121"/>
    </location>
    <ligand>
        <name>Mg(2+)</name>
        <dbReference type="ChEBI" id="CHEBI:18420"/>
        <label>1</label>
    </ligand>
</feature>
<feature type="binding site" evidence="1">
    <location>
        <position position="121"/>
    </location>
    <ligand>
        <name>Mg(2+)</name>
        <dbReference type="ChEBI" id="CHEBI:18420"/>
        <label>2</label>
    </ligand>
</feature>
<feature type="binding site" evidence="1">
    <location>
        <position position="153"/>
    </location>
    <ligand>
        <name>Mg(2+)</name>
        <dbReference type="ChEBI" id="CHEBI:18420"/>
        <label>1</label>
    </ligand>
</feature>
<keyword id="KW-0963">Cytoplasm</keyword>
<keyword id="KW-0378">Hydrolase</keyword>
<keyword id="KW-0460">Magnesium</keyword>
<keyword id="KW-0479">Metal-binding</keyword>
<keyword id="KW-1185">Reference proteome</keyword>
<comment type="catalytic activity">
    <reaction>
        <text>diphosphate + H2O = 2 phosphate + H(+)</text>
        <dbReference type="Rhea" id="RHEA:24576"/>
        <dbReference type="ChEBI" id="CHEBI:15377"/>
        <dbReference type="ChEBI" id="CHEBI:15378"/>
        <dbReference type="ChEBI" id="CHEBI:33019"/>
        <dbReference type="ChEBI" id="CHEBI:43474"/>
        <dbReference type="EC" id="3.6.1.1"/>
    </reaction>
</comment>
<comment type="cofactor">
    <cofactor evidence="1">
        <name>Mg(2+)</name>
        <dbReference type="ChEBI" id="CHEBI:18420"/>
    </cofactor>
</comment>
<comment type="subcellular location">
    <subcellularLocation>
        <location evidence="1">Cytoplasm</location>
    </subcellularLocation>
</comment>
<comment type="similarity">
    <text evidence="2">Belongs to the PPase family.</text>
</comment>
<gene>
    <name type="primary">IPP1</name>
    <name type="ordered locus">DEHA2B13090g</name>
</gene>